<reference key="1">
    <citation type="journal article" date="2008" name="PLoS ONE">
        <title>Genome sequence of Brucella abortus vaccine strain S19 compared to virulent strains yields candidate virulence genes.</title>
        <authorList>
            <person name="Crasta O.R."/>
            <person name="Folkerts O."/>
            <person name="Fei Z."/>
            <person name="Mane S.P."/>
            <person name="Evans C."/>
            <person name="Martino-Catt S."/>
            <person name="Bricker B."/>
            <person name="Yu G."/>
            <person name="Du L."/>
            <person name="Sobral B.W."/>
        </authorList>
    </citation>
    <scope>NUCLEOTIDE SEQUENCE [LARGE SCALE GENOMIC DNA]</scope>
    <source>
        <strain>S19</strain>
    </source>
</reference>
<protein>
    <recommendedName>
        <fullName evidence="1">Malate synthase G</fullName>
        <ecNumber evidence="1">2.3.3.9</ecNumber>
    </recommendedName>
</protein>
<organism>
    <name type="scientific">Brucella abortus (strain S19)</name>
    <dbReference type="NCBI Taxonomy" id="430066"/>
    <lineage>
        <taxon>Bacteria</taxon>
        <taxon>Pseudomonadati</taxon>
        <taxon>Pseudomonadota</taxon>
        <taxon>Alphaproteobacteria</taxon>
        <taxon>Hyphomicrobiales</taxon>
        <taxon>Brucellaceae</taxon>
        <taxon>Brucella/Ochrobactrum group</taxon>
        <taxon>Brucella</taxon>
    </lineage>
</organism>
<gene>
    <name evidence="1" type="primary">glcB</name>
    <name type="ordered locus">BAbS19_I15560</name>
</gene>
<feature type="chain" id="PRO_1000130888" description="Malate synthase G">
    <location>
        <begin position="1"/>
        <end position="728"/>
    </location>
</feature>
<feature type="active site" description="Proton acceptor" evidence="1">
    <location>
        <position position="345"/>
    </location>
</feature>
<feature type="active site" description="Proton donor" evidence="1">
    <location>
        <position position="636"/>
    </location>
</feature>
<feature type="binding site" evidence="1">
    <location>
        <position position="123"/>
    </location>
    <ligand>
        <name>acetyl-CoA</name>
        <dbReference type="ChEBI" id="CHEBI:57288"/>
    </ligand>
</feature>
<feature type="binding site" evidence="1">
    <location>
        <begin position="130"/>
        <end position="131"/>
    </location>
    <ligand>
        <name>acetyl-CoA</name>
        <dbReference type="ChEBI" id="CHEBI:57288"/>
    </ligand>
</feature>
<feature type="binding site" evidence="1">
    <location>
        <position position="281"/>
    </location>
    <ligand>
        <name>acetyl-CoA</name>
        <dbReference type="ChEBI" id="CHEBI:57288"/>
    </ligand>
</feature>
<feature type="binding site" evidence="1">
    <location>
        <position position="318"/>
    </location>
    <ligand>
        <name>acetyl-CoA</name>
        <dbReference type="ChEBI" id="CHEBI:57288"/>
    </ligand>
</feature>
<feature type="binding site" evidence="1">
    <location>
        <position position="345"/>
    </location>
    <ligand>
        <name>glyoxylate</name>
        <dbReference type="ChEBI" id="CHEBI:36655"/>
    </ligand>
</feature>
<feature type="binding site" evidence="1">
    <location>
        <position position="437"/>
    </location>
    <ligand>
        <name>glyoxylate</name>
        <dbReference type="ChEBI" id="CHEBI:36655"/>
    </ligand>
</feature>
<feature type="binding site" evidence="1">
    <location>
        <position position="437"/>
    </location>
    <ligand>
        <name>Mg(2+)</name>
        <dbReference type="ChEBI" id="CHEBI:18420"/>
    </ligand>
</feature>
<feature type="binding site" evidence="1">
    <location>
        <begin position="462"/>
        <end position="465"/>
    </location>
    <ligand>
        <name>glyoxylate</name>
        <dbReference type="ChEBI" id="CHEBI:36655"/>
    </ligand>
</feature>
<feature type="binding site" evidence="1">
    <location>
        <position position="465"/>
    </location>
    <ligand>
        <name>Mg(2+)</name>
        <dbReference type="ChEBI" id="CHEBI:18420"/>
    </ligand>
</feature>
<feature type="binding site" evidence="1">
    <location>
        <position position="546"/>
    </location>
    <ligand>
        <name>acetyl-CoA</name>
        <dbReference type="ChEBI" id="CHEBI:57288"/>
    </ligand>
</feature>
<feature type="modified residue" description="Cysteine sulfenic acid (-SOH)" evidence="1">
    <location>
        <position position="622"/>
    </location>
</feature>
<accession>B2S793</accession>
<evidence type="ECO:0000255" key="1">
    <source>
        <dbReference type="HAMAP-Rule" id="MF_00641"/>
    </source>
</evidence>
<dbReference type="EC" id="2.3.3.9" evidence="1"/>
<dbReference type="EMBL" id="CP000887">
    <property type="protein sequence ID" value="ACD73040.1"/>
    <property type="molecule type" value="Genomic_DNA"/>
</dbReference>
<dbReference type="RefSeq" id="WP_002966937.1">
    <property type="nucleotide sequence ID" value="NC_010742.1"/>
</dbReference>
<dbReference type="SMR" id="B2S793"/>
<dbReference type="KEGG" id="bmc:BAbS19_I15560"/>
<dbReference type="HOGENOM" id="CLU_028446_1_0_5"/>
<dbReference type="UniPathway" id="UPA00703">
    <property type="reaction ID" value="UER00720"/>
</dbReference>
<dbReference type="Proteomes" id="UP000002565">
    <property type="component" value="Chromosome 1"/>
</dbReference>
<dbReference type="GO" id="GO:0005829">
    <property type="term" value="C:cytosol"/>
    <property type="evidence" value="ECO:0007669"/>
    <property type="project" value="TreeGrafter"/>
</dbReference>
<dbReference type="GO" id="GO:0000287">
    <property type="term" value="F:magnesium ion binding"/>
    <property type="evidence" value="ECO:0007669"/>
    <property type="project" value="TreeGrafter"/>
</dbReference>
<dbReference type="GO" id="GO:0004474">
    <property type="term" value="F:malate synthase activity"/>
    <property type="evidence" value="ECO:0007669"/>
    <property type="project" value="UniProtKB-UniRule"/>
</dbReference>
<dbReference type="GO" id="GO:0009436">
    <property type="term" value="P:glyoxylate catabolic process"/>
    <property type="evidence" value="ECO:0007669"/>
    <property type="project" value="TreeGrafter"/>
</dbReference>
<dbReference type="GO" id="GO:0006097">
    <property type="term" value="P:glyoxylate cycle"/>
    <property type="evidence" value="ECO:0007669"/>
    <property type="project" value="UniProtKB-UniRule"/>
</dbReference>
<dbReference type="GO" id="GO:0006099">
    <property type="term" value="P:tricarboxylic acid cycle"/>
    <property type="evidence" value="ECO:0007669"/>
    <property type="project" value="UniProtKB-KW"/>
</dbReference>
<dbReference type="CDD" id="cd00728">
    <property type="entry name" value="malate_synt_G"/>
    <property type="match status" value="1"/>
</dbReference>
<dbReference type="FunFam" id="3.20.20.360:FF:000002">
    <property type="entry name" value="Malate synthase G"/>
    <property type="match status" value="1"/>
</dbReference>
<dbReference type="Gene3D" id="3.20.20.360">
    <property type="entry name" value="Malate synthase, domain 3"/>
    <property type="match status" value="2"/>
</dbReference>
<dbReference type="Gene3D" id="1.20.1220.12">
    <property type="entry name" value="Malate synthase, domain III"/>
    <property type="match status" value="1"/>
</dbReference>
<dbReference type="HAMAP" id="MF_00641">
    <property type="entry name" value="Malate_synth_G"/>
    <property type="match status" value="1"/>
</dbReference>
<dbReference type="InterPro" id="IPR044856">
    <property type="entry name" value="Malate_synth_C_sf"/>
</dbReference>
<dbReference type="InterPro" id="IPR011076">
    <property type="entry name" value="Malate_synth_sf"/>
</dbReference>
<dbReference type="InterPro" id="IPR001465">
    <property type="entry name" value="Malate_synthase_TIM"/>
</dbReference>
<dbReference type="InterPro" id="IPR006253">
    <property type="entry name" value="Malate_synthG"/>
</dbReference>
<dbReference type="InterPro" id="IPR048355">
    <property type="entry name" value="MS_C"/>
</dbReference>
<dbReference type="InterPro" id="IPR048356">
    <property type="entry name" value="MS_N"/>
</dbReference>
<dbReference type="InterPro" id="IPR046363">
    <property type="entry name" value="MS_N_TIM-barrel_dom"/>
</dbReference>
<dbReference type="InterPro" id="IPR048357">
    <property type="entry name" value="MSG_insertion"/>
</dbReference>
<dbReference type="NCBIfam" id="TIGR01345">
    <property type="entry name" value="malate_syn_G"/>
    <property type="match status" value="1"/>
</dbReference>
<dbReference type="NCBIfam" id="NF002825">
    <property type="entry name" value="PRK02999.1"/>
    <property type="match status" value="1"/>
</dbReference>
<dbReference type="PANTHER" id="PTHR42739">
    <property type="entry name" value="MALATE SYNTHASE G"/>
    <property type="match status" value="1"/>
</dbReference>
<dbReference type="PANTHER" id="PTHR42739:SF1">
    <property type="entry name" value="MALATE SYNTHASE G"/>
    <property type="match status" value="1"/>
</dbReference>
<dbReference type="Pfam" id="PF20659">
    <property type="entry name" value="MS_C"/>
    <property type="match status" value="1"/>
</dbReference>
<dbReference type="Pfam" id="PF20656">
    <property type="entry name" value="MS_N"/>
    <property type="match status" value="1"/>
</dbReference>
<dbReference type="Pfam" id="PF01274">
    <property type="entry name" value="MS_TIM-barrel"/>
    <property type="match status" value="1"/>
</dbReference>
<dbReference type="Pfam" id="PF20658">
    <property type="entry name" value="MSG_insertion"/>
    <property type="match status" value="1"/>
</dbReference>
<dbReference type="SUPFAM" id="SSF51645">
    <property type="entry name" value="Malate synthase G"/>
    <property type="match status" value="1"/>
</dbReference>
<comment type="function">
    <text evidence="1">Involved in the glycolate utilization. Catalyzes the condensation and subsequent hydrolysis of acetyl-coenzyme A (acetyl-CoA) and glyoxylate to form malate and CoA.</text>
</comment>
<comment type="catalytic activity">
    <reaction evidence="1">
        <text>glyoxylate + acetyl-CoA + H2O = (S)-malate + CoA + H(+)</text>
        <dbReference type="Rhea" id="RHEA:18181"/>
        <dbReference type="ChEBI" id="CHEBI:15377"/>
        <dbReference type="ChEBI" id="CHEBI:15378"/>
        <dbReference type="ChEBI" id="CHEBI:15589"/>
        <dbReference type="ChEBI" id="CHEBI:36655"/>
        <dbReference type="ChEBI" id="CHEBI:57287"/>
        <dbReference type="ChEBI" id="CHEBI:57288"/>
        <dbReference type="EC" id="2.3.3.9"/>
    </reaction>
</comment>
<comment type="cofactor">
    <cofactor evidence="1">
        <name>Mg(2+)</name>
        <dbReference type="ChEBI" id="CHEBI:18420"/>
    </cofactor>
</comment>
<comment type="pathway">
    <text evidence="1">Carbohydrate metabolism; glyoxylate cycle; (S)-malate from isocitrate: step 2/2.</text>
</comment>
<comment type="subunit">
    <text evidence="1">Monomer.</text>
</comment>
<comment type="subcellular location">
    <subcellularLocation>
        <location evidence="1">Cytoplasm</location>
    </subcellularLocation>
</comment>
<comment type="similarity">
    <text evidence="1">Belongs to the malate synthase family. GlcB subfamily.</text>
</comment>
<keyword id="KW-0963">Cytoplasm</keyword>
<keyword id="KW-0329">Glyoxylate bypass</keyword>
<keyword id="KW-0460">Magnesium</keyword>
<keyword id="KW-0479">Metal-binding</keyword>
<keyword id="KW-0558">Oxidation</keyword>
<keyword id="KW-0808">Transferase</keyword>
<keyword id="KW-0816">Tricarboxylic acid cycle</keyword>
<sequence length="728" mass="80044">MGSAEKRNYVEIEGLAVAPELVEFLAKEAAPGTGVEPEKFWKGFAAIIRDLTPKNRALLAKRDELQARIDAWYKENRDKGYSQADYQQFLKDIGYLLPEGGAFSVSTTNVDPEITHIAGPQLVVPVMNARYALNAANARWGSLYDALYGTDAISEADGAEKGKGYNPKRGEKVIAWAKNFLDESAPLSTGKWADVAGLAVNDGKLEIRLTDGSATTLKDESQFKGYNGDAASPTNVLLAKHNMHVDIVINADHPIGKTDPAHIADVVLESAISTIQDCEDSIAVVDAEDKVAVYRNWLGLMNGKLEDTFEKNGKQMTRRLNGDRTYTAPDGSTLTLKGRSLMLVRNVGHLMTNPAILDAEGNEVPEGIMDAAFTSLIALHDIGPNGRHMNSREGSVYIVKPKMHGPEEVAFANEIFTRTEEMLGMKPNTLKIGIMDEERRTTVNLKEAIRAAKDRVVFINTGFLDRTGDEIHTSMEAGPMIRKGDMKQAAWIGAYEQWNVDIGLECGLSGHAQIGKGMWAMPDMMAAMLEQKIAHPKAGANTAWVPSPTAATLHATHYHKIDVAAVQEKLKSRPRAKLDDILSVPVAVRPNWTPDDIQHEIDNNAQGILGYVVRWIDQGVGCSKVPDINNVGLMEDRATLRISAQHIANWLYHGVVSEAQVMETMKRMAAIVDKQNEGDPLYRPMAADFDKSIAFQAACDLVFKGREQPNGYTEPVLHRRRLELKQAS</sequence>
<proteinExistence type="inferred from homology"/>
<name>MASZ_BRUA1</name>